<organism>
    <name type="scientific">Saccharomyces cerevisiae (strain ATCC 204508 / S288c)</name>
    <name type="common">Baker's yeast</name>
    <dbReference type="NCBI Taxonomy" id="559292"/>
    <lineage>
        <taxon>Eukaryota</taxon>
        <taxon>Fungi</taxon>
        <taxon>Dikarya</taxon>
        <taxon>Ascomycota</taxon>
        <taxon>Saccharomycotina</taxon>
        <taxon>Saccharomycetes</taxon>
        <taxon>Saccharomycetales</taxon>
        <taxon>Saccharomycetaceae</taxon>
        <taxon>Saccharomyces</taxon>
    </lineage>
</organism>
<comment type="function">
    <text evidence="2">Essential for vacuolar protein sorting. Required for vacuole biogenesis, stability and to maintain vacuole morphology. Required for growth at elevated temperatures. Acts as a component of the HOPS complex that acts during the docking stage of vacuole fusion. HOPS is an effector for the vacuolar Rab GTPase YPT7 and is required for vacuolar SNARE complex assembly. It remains bound to SNARE complexes after vacuole fusion.</text>
</comment>
<comment type="subunit">
    <text evidence="2">Component of the HOPS complex which is composed of PEP5, VPS16, PEP3, VPS33, VPS39 and VPS41. HOPS associates with phosphoinositides and the PX domain of VAM7. Interacts with VAM7.</text>
</comment>
<comment type="interaction">
    <interactant intactId="EBI-20355">
        <id>Q03308</id>
    </interactant>
    <interactant intactId="EBI-6450">
        <id>P12868</id>
        <label>PEP5</label>
    </interactant>
    <organismsDiffer>false</organismsDiffer>
    <experiments>5</experiments>
</comment>
<comment type="interaction">
    <interactant intactId="EBI-20355">
        <id>Q03308</id>
    </interactant>
    <interactant intactId="EBI-20395">
        <id>P20795</id>
        <label>VPS33</label>
    </interactant>
    <organismsDiffer>false</organismsDiffer>
    <experiments>6</experiments>
</comment>
<comment type="subcellular location">
    <subcellularLocation>
        <location>Cytoplasm</location>
    </subcellularLocation>
    <subcellularLocation>
        <location>Vacuole</location>
    </subcellularLocation>
</comment>
<comment type="miscellaneous">
    <text evidence="1">Present with 1300 molecules/cell in log phase SD medium.</text>
</comment>
<comment type="similarity">
    <text evidence="3">Belongs to the VPS16 family.</text>
</comment>
<name>VPS16_YEAST</name>
<reference key="1">
    <citation type="journal article" date="1993" name="J. Biol. Chem.">
        <title>The VPS16 gene product associates with a sedimentable protein complex and is essential for vacuolar protein sorting in yeast.</title>
        <authorList>
            <person name="Horazdovsky B.F."/>
            <person name="Emr S.D."/>
        </authorList>
    </citation>
    <scope>NUCLEOTIDE SEQUENCE [GENOMIC DNA]</scope>
</reference>
<reference key="2">
    <citation type="journal article" date="1997" name="Nature">
        <title>The nucleotide sequence of Saccharomyces cerevisiae chromosome XVI.</title>
        <authorList>
            <person name="Bussey H."/>
            <person name="Storms R.K."/>
            <person name="Ahmed A."/>
            <person name="Albermann K."/>
            <person name="Allen E."/>
            <person name="Ansorge W."/>
            <person name="Araujo R."/>
            <person name="Aparicio A."/>
            <person name="Barrell B.G."/>
            <person name="Badcock K."/>
            <person name="Benes V."/>
            <person name="Botstein D."/>
            <person name="Bowman S."/>
            <person name="Brueckner M."/>
            <person name="Carpenter J."/>
            <person name="Cherry J.M."/>
            <person name="Chung E."/>
            <person name="Churcher C.M."/>
            <person name="Coster F."/>
            <person name="Davis K."/>
            <person name="Davis R.W."/>
            <person name="Dietrich F.S."/>
            <person name="Delius H."/>
            <person name="DiPaolo T."/>
            <person name="Dubois E."/>
            <person name="Duesterhoeft A."/>
            <person name="Duncan M."/>
            <person name="Floeth M."/>
            <person name="Fortin N."/>
            <person name="Friesen J.D."/>
            <person name="Fritz C."/>
            <person name="Goffeau A."/>
            <person name="Hall J."/>
            <person name="Hebling U."/>
            <person name="Heumann K."/>
            <person name="Hilbert H."/>
            <person name="Hillier L.W."/>
            <person name="Hunicke-Smith S."/>
            <person name="Hyman R.W."/>
            <person name="Johnston M."/>
            <person name="Kalman S."/>
            <person name="Kleine K."/>
            <person name="Komp C."/>
            <person name="Kurdi O."/>
            <person name="Lashkari D."/>
            <person name="Lew H."/>
            <person name="Lin A."/>
            <person name="Lin D."/>
            <person name="Louis E.J."/>
            <person name="Marathe R."/>
            <person name="Messenguy F."/>
            <person name="Mewes H.-W."/>
            <person name="Mirtipati S."/>
            <person name="Moestl D."/>
            <person name="Mueller-Auer S."/>
            <person name="Namath A."/>
            <person name="Nentwich U."/>
            <person name="Oefner P."/>
            <person name="Pearson D."/>
            <person name="Petel F.X."/>
            <person name="Pohl T.M."/>
            <person name="Purnelle B."/>
            <person name="Rajandream M.A."/>
            <person name="Rechmann S."/>
            <person name="Rieger M."/>
            <person name="Riles L."/>
            <person name="Roberts D."/>
            <person name="Schaefer M."/>
            <person name="Scharfe M."/>
            <person name="Scherens B."/>
            <person name="Schramm S."/>
            <person name="Schroeder M."/>
            <person name="Sdicu A.-M."/>
            <person name="Tettelin H."/>
            <person name="Urrestarazu L.A."/>
            <person name="Ushinsky S."/>
            <person name="Vierendeels F."/>
            <person name="Vissers S."/>
            <person name="Voss H."/>
            <person name="Walsh S.V."/>
            <person name="Wambutt R."/>
            <person name="Wang Y."/>
            <person name="Wedler E."/>
            <person name="Wedler H."/>
            <person name="Winnett E."/>
            <person name="Zhong W.-W."/>
            <person name="Zollner A."/>
            <person name="Vo D.H."/>
            <person name="Hani J."/>
        </authorList>
    </citation>
    <scope>NUCLEOTIDE SEQUENCE [LARGE SCALE GENOMIC DNA]</scope>
    <source>
        <strain>ATCC 204508 / S288c</strain>
    </source>
</reference>
<reference key="3">
    <citation type="journal article" date="2014" name="G3 (Bethesda)">
        <title>The reference genome sequence of Saccharomyces cerevisiae: Then and now.</title>
        <authorList>
            <person name="Engel S.R."/>
            <person name="Dietrich F.S."/>
            <person name="Fisk D.G."/>
            <person name="Binkley G."/>
            <person name="Balakrishnan R."/>
            <person name="Costanzo M.C."/>
            <person name="Dwight S.S."/>
            <person name="Hitz B.C."/>
            <person name="Karra K."/>
            <person name="Nash R.S."/>
            <person name="Weng S."/>
            <person name="Wong E.D."/>
            <person name="Lloyd P."/>
            <person name="Skrzypek M.S."/>
            <person name="Miyasato S.R."/>
            <person name="Simison M."/>
            <person name="Cherry J.M."/>
        </authorList>
    </citation>
    <scope>GENOME REANNOTATION</scope>
    <source>
        <strain>ATCC 204508 / S288c</strain>
    </source>
</reference>
<reference key="4">
    <citation type="journal article" date="2003" name="Nature">
        <title>Global analysis of protein expression in yeast.</title>
        <authorList>
            <person name="Ghaemmaghami S."/>
            <person name="Huh W.-K."/>
            <person name="Bower K."/>
            <person name="Howson R.W."/>
            <person name="Belle A."/>
            <person name="Dephoure N."/>
            <person name="O'Shea E.K."/>
            <person name="Weissman J.S."/>
        </authorList>
    </citation>
    <scope>LEVEL OF PROTEIN EXPRESSION [LARGE SCALE ANALYSIS]</scope>
</reference>
<reference key="5">
    <citation type="journal article" date="2006" name="EMBO J.">
        <title>Purification of active HOPS complex reveals its affinities for phosphoinositides and the SNARE Vam7p.</title>
        <authorList>
            <person name="Stroupe C."/>
            <person name="Collins K.M."/>
            <person name="Fratti R.A."/>
            <person name="Wickner W."/>
        </authorList>
    </citation>
    <scope>IDENTIFICATION IN THE HOPS COMPLEX</scope>
    <scope>FUNCTION OF THE HOPS COMPLEX</scope>
    <scope>INTERACTION WITH VAM7</scope>
</reference>
<proteinExistence type="evidence at protein level"/>
<dbReference type="EMBL" id="L07327">
    <property type="protein sequence ID" value="AAA35215.1"/>
    <property type="molecule type" value="Genomic_DNA"/>
</dbReference>
<dbReference type="EMBL" id="U44030">
    <property type="protein sequence ID" value="AAB68176.1"/>
    <property type="molecule type" value="Genomic_DNA"/>
</dbReference>
<dbReference type="EMBL" id="BK006949">
    <property type="protein sequence ID" value="DAA11385.1"/>
    <property type="molecule type" value="Genomic_DNA"/>
</dbReference>
<dbReference type="PIR" id="S62031">
    <property type="entry name" value="S62031"/>
</dbReference>
<dbReference type="RefSeq" id="NP_015280.1">
    <property type="nucleotide sequence ID" value="NM_001183859.1"/>
</dbReference>
<dbReference type="PDB" id="7ZU0">
    <property type="method" value="EM"/>
    <property type="resolution" value="4.40 A"/>
    <property type="chains" value="B=1-798"/>
</dbReference>
<dbReference type="PDB" id="8QX8">
    <property type="method" value="EM"/>
    <property type="resolution" value="4.60 A"/>
    <property type="chains" value="B=1-798"/>
</dbReference>
<dbReference type="PDBsum" id="7ZU0"/>
<dbReference type="PDBsum" id="8QX8"/>
<dbReference type="EMDB" id="EMD-14964"/>
<dbReference type="EMDB" id="EMD-18701"/>
<dbReference type="EMDB" id="EMD-2280"/>
<dbReference type="SMR" id="Q03308"/>
<dbReference type="BioGRID" id="36135">
    <property type="interactions" value="69"/>
</dbReference>
<dbReference type="ComplexPortal" id="CPX-1625">
    <property type="entry name" value="HOPS tethering complex"/>
</dbReference>
<dbReference type="ComplexPortal" id="CPX-1626">
    <property type="entry name" value="CORVET tethering complex"/>
</dbReference>
<dbReference type="DIP" id="DIP-6691N"/>
<dbReference type="FunCoup" id="Q03308">
    <property type="interactions" value="1227"/>
</dbReference>
<dbReference type="IntAct" id="Q03308">
    <property type="interactions" value="15"/>
</dbReference>
<dbReference type="MINT" id="Q03308"/>
<dbReference type="STRING" id="4932.YPL045W"/>
<dbReference type="iPTMnet" id="Q03308"/>
<dbReference type="PaxDb" id="4932-YPL045W"/>
<dbReference type="PeptideAtlas" id="Q03308"/>
<dbReference type="EnsemblFungi" id="YPL045W_mRNA">
    <property type="protein sequence ID" value="YPL045W"/>
    <property type="gene ID" value="YPL045W"/>
</dbReference>
<dbReference type="GeneID" id="856062"/>
<dbReference type="KEGG" id="sce:YPL045W"/>
<dbReference type="AGR" id="SGD:S000005966"/>
<dbReference type="SGD" id="S000005966">
    <property type="gene designation" value="VPS16"/>
</dbReference>
<dbReference type="VEuPathDB" id="FungiDB:YPL045W"/>
<dbReference type="eggNOG" id="KOG2280">
    <property type="taxonomic scope" value="Eukaryota"/>
</dbReference>
<dbReference type="GeneTree" id="ENSGT00390000003896"/>
<dbReference type="HOGENOM" id="CLU_008909_1_0_1"/>
<dbReference type="InParanoid" id="Q03308"/>
<dbReference type="OMA" id="YVTFWYP"/>
<dbReference type="OrthoDB" id="1792at2759"/>
<dbReference type="BioCyc" id="YEAST:G3O-33958-MONOMER"/>
<dbReference type="BioGRID-ORCS" id="856062">
    <property type="hits" value="2 hits in 10 CRISPR screens"/>
</dbReference>
<dbReference type="PRO" id="PR:Q03308"/>
<dbReference type="Proteomes" id="UP000002311">
    <property type="component" value="Chromosome XVI"/>
</dbReference>
<dbReference type="RNAct" id="Q03308">
    <property type="molecule type" value="protein"/>
</dbReference>
<dbReference type="GO" id="GO:0033263">
    <property type="term" value="C:CORVET complex"/>
    <property type="evidence" value="ECO:0000314"/>
    <property type="project" value="SGD"/>
</dbReference>
<dbReference type="GO" id="GO:0005829">
    <property type="term" value="C:cytosol"/>
    <property type="evidence" value="ECO:0007669"/>
    <property type="project" value="GOC"/>
</dbReference>
<dbReference type="GO" id="GO:0031901">
    <property type="term" value="C:early endosome membrane"/>
    <property type="evidence" value="ECO:0000314"/>
    <property type="project" value="ComplexPortal"/>
</dbReference>
<dbReference type="GO" id="GO:0005768">
    <property type="term" value="C:endosome"/>
    <property type="evidence" value="ECO:0000318"/>
    <property type="project" value="GO_Central"/>
</dbReference>
<dbReference type="GO" id="GO:0000329">
    <property type="term" value="C:fungal-type vacuole membrane"/>
    <property type="evidence" value="ECO:0000314"/>
    <property type="project" value="SGD"/>
</dbReference>
<dbReference type="GO" id="GO:0030897">
    <property type="term" value="C:HOPS complex"/>
    <property type="evidence" value="ECO:0000353"/>
    <property type="project" value="ComplexPortal"/>
</dbReference>
<dbReference type="GO" id="GO:0003779">
    <property type="term" value="F:actin binding"/>
    <property type="evidence" value="ECO:0000318"/>
    <property type="project" value="GO_Central"/>
</dbReference>
<dbReference type="GO" id="GO:0016197">
    <property type="term" value="P:endosomal transport"/>
    <property type="evidence" value="ECO:0000318"/>
    <property type="project" value="GO_Central"/>
</dbReference>
<dbReference type="GO" id="GO:0006895">
    <property type="term" value="P:Golgi to endosome transport"/>
    <property type="evidence" value="ECO:0000315"/>
    <property type="project" value="SGD"/>
</dbReference>
<dbReference type="GO" id="GO:0045324">
    <property type="term" value="P:late endosome to vacuole transport"/>
    <property type="evidence" value="ECO:0000315"/>
    <property type="project" value="SGD"/>
</dbReference>
<dbReference type="GO" id="GO:0006623">
    <property type="term" value="P:protein targeting to vacuole"/>
    <property type="evidence" value="ECO:0000315"/>
    <property type="project" value="SGD"/>
</dbReference>
<dbReference type="GO" id="GO:0035542">
    <property type="term" value="P:regulation of SNARE complex assembly"/>
    <property type="evidence" value="ECO:0000314"/>
    <property type="project" value="SGD"/>
</dbReference>
<dbReference type="GO" id="GO:0032889">
    <property type="term" value="P:regulation of vacuole fusion, non-autophagic"/>
    <property type="evidence" value="ECO:0000314"/>
    <property type="project" value="ComplexPortal"/>
</dbReference>
<dbReference type="GO" id="GO:0042144">
    <property type="term" value="P:vacuole fusion, non-autophagic"/>
    <property type="evidence" value="ECO:0000314"/>
    <property type="project" value="SGD"/>
</dbReference>
<dbReference type="GO" id="GO:0007033">
    <property type="term" value="P:vacuole organization"/>
    <property type="evidence" value="ECO:0000315"/>
    <property type="project" value="SGD"/>
</dbReference>
<dbReference type="GO" id="GO:0099022">
    <property type="term" value="P:vesicle tethering"/>
    <property type="evidence" value="ECO:0000314"/>
    <property type="project" value="ComplexPortal"/>
</dbReference>
<dbReference type="Gene3D" id="1.10.150.780">
    <property type="entry name" value="Vps16, C-terminal region"/>
    <property type="match status" value="1"/>
</dbReference>
<dbReference type="InterPro" id="IPR016534">
    <property type="entry name" value="VPS16"/>
</dbReference>
<dbReference type="InterPro" id="IPR006925">
    <property type="entry name" value="Vps16_C"/>
</dbReference>
<dbReference type="InterPro" id="IPR038132">
    <property type="entry name" value="Vps16_C_sf"/>
</dbReference>
<dbReference type="InterPro" id="IPR006926">
    <property type="entry name" value="Vps16_N"/>
</dbReference>
<dbReference type="PANTHER" id="PTHR12811">
    <property type="entry name" value="VACUOLAR PROTEIN SORTING VPS16"/>
    <property type="match status" value="1"/>
</dbReference>
<dbReference type="PANTHER" id="PTHR12811:SF0">
    <property type="entry name" value="VACUOLAR PROTEIN SORTING-ASSOCIATED PROTEIN 16 HOMOLOG"/>
    <property type="match status" value="1"/>
</dbReference>
<dbReference type="Pfam" id="PF04840">
    <property type="entry name" value="Vps16_C"/>
    <property type="match status" value="1"/>
</dbReference>
<dbReference type="Pfam" id="PF04841">
    <property type="entry name" value="Vps16_N"/>
    <property type="match status" value="1"/>
</dbReference>
<dbReference type="PIRSF" id="PIRSF007949">
    <property type="entry name" value="VPS16"/>
    <property type="match status" value="1"/>
</dbReference>
<dbReference type="SUPFAM" id="SSF75011">
    <property type="entry name" value="3-carboxy-cis,cis-mucoante lactonizing enzyme"/>
    <property type="match status" value="1"/>
</dbReference>
<evidence type="ECO:0000269" key="1">
    <source>
    </source>
</evidence>
<evidence type="ECO:0000269" key="2">
    <source>
    </source>
</evidence>
<evidence type="ECO:0000305" key="3"/>
<feature type="chain" id="PRO_0000065891" description="Vacuolar protein sorting-associated protein 16">
    <location>
        <begin position="1"/>
        <end position="798"/>
    </location>
</feature>
<feature type="sequence conflict" description="In Ref. 1; AAA35215." evidence="3" ref="1">
    <original>L</original>
    <variation>R</variation>
    <location>
        <position position="100"/>
    </location>
</feature>
<feature type="sequence conflict" description="In Ref. 1; AAA35215." evidence="3" ref="1">
    <original>V</original>
    <variation>I</variation>
    <location>
        <position position="170"/>
    </location>
</feature>
<feature type="sequence conflict" description="In Ref. 1; AAA35215." evidence="3" ref="1">
    <original>AIEILKNFVLEKGVL</original>
    <variation>QLNIKEFCLREGCT</variation>
    <location>
        <begin position="326"/>
        <end position="340"/>
    </location>
</feature>
<protein>
    <recommendedName>
        <fullName>Vacuolar protein sorting-associated protein 16</fullName>
    </recommendedName>
    <alternativeName>
        <fullName>Vacuolar morphogenesis protein 9</fullName>
    </alternativeName>
    <alternativeName>
        <fullName>Vacuolar protein-targeting protein 16</fullName>
    </alternativeName>
</protein>
<sequence length="798" mass="92741">MKNPSFDWERLKDVFYRSRAIGELKWPTQYEEFKCALSLTVIAVEIQDFIQVYNYFGQLLGKINLQRIHEDIIKFEFDKDEKLILVTKSSIKIVKGWSPLTIESVPLQDPTIDTIWDYHNGIMLLAKSRDIYKLNGNEWELLYENKDKKYNLLTKNHWSCNDDSIILLDVDHVYQVSTSNGALLKLITDSSWHKVTISSRGFICLYNMKDNKLQIFRDPARILMEHNLDSTPDDICWCGNDTVACSFEDEIKLYGPDGLYVTFWYPFTVTNLRAEVDGLKVITTEKIYFLSRVQPQTSNIFRIGSTEPGAMLVDSFSLLEDHAPKAIEILKNFVLEKGVLDCIAAAIDEFEPKLQKMLLNAASYGKASLQYKSFDASIFVNACNTIKLLNCFRSFGIFLTVEEYRCISLKGVIDRLLKYHRYYECIQICKLANERFLLGYVFTEWAKDKIKGSPDMEDDELLDKIKSRLSVIDMTDTLQMVAVAKVAYLEGRFQLSRNLALLEKNEEARIEQLYNLDDDSIALKECIKVQNYSLTISLLIALSKKLTNSQLTKLLIIDMFNNPLYLYYMRMDKAYLYDFYRQTDRFIDLAHVLLQQGKEQQSLHSFLPQIKDLYSQVQNSEVVNNTIEQLQRQEKLWIYQESLGKRFAISFTNMTLDQTLSKLIETGQDKQVKEIVKKFKISEKKLYHLKCKTLVEAKKFDELLQFAQSRKSPIGYMPFYTYLKSRGHMDKASPYVNMIPGLSYQEKKKLYVECRGFRDAIQLAGKEKDIPGLKEIYNIIPPNEPELKALANETMSRI</sequence>
<accession>Q03308</accession>
<accession>D6W3W9</accession>
<accession>Q03078</accession>
<gene>
    <name type="primary">VPS16</name>
    <name type="synonym">VAM9</name>
    <name type="synonym">VPT16</name>
    <name type="ordered locus">YPL045W</name>
</gene>
<keyword id="KW-0002">3D-structure</keyword>
<keyword id="KW-0963">Cytoplasm</keyword>
<keyword id="KW-0653">Protein transport</keyword>
<keyword id="KW-1185">Reference proteome</keyword>
<keyword id="KW-0813">Transport</keyword>
<keyword id="KW-0926">Vacuole</keyword>